<dbReference type="EC" id="6.3.4.19" evidence="1"/>
<dbReference type="EMBL" id="AJ235270">
    <property type="protein sequence ID" value="CAA14513.1"/>
    <property type="molecule type" value="Genomic_DNA"/>
</dbReference>
<dbReference type="PIR" id="B71712">
    <property type="entry name" value="B71712"/>
</dbReference>
<dbReference type="RefSeq" id="NP_220436.1">
    <property type="nucleotide sequence ID" value="NC_000963.1"/>
</dbReference>
<dbReference type="RefSeq" id="WP_004596638.1">
    <property type="nucleotide sequence ID" value="NC_000963.1"/>
</dbReference>
<dbReference type="SMR" id="Q9ZEA3"/>
<dbReference type="STRING" id="272947.gene:17555125"/>
<dbReference type="EnsemblBacteria" id="CAA14513">
    <property type="protein sequence ID" value="CAA14513"/>
    <property type="gene ID" value="CAA14513"/>
</dbReference>
<dbReference type="GeneID" id="57569170"/>
<dbReference type="KEGG" id="rpr:RP042"/>
<dbReference type="PATRIC" id="fig|272947.5.peg.43"/>
<dbReference type="eggNOG" id="COG0037">
    <property type="taxonomic scope" value="Bacteria"/>
</dbReference>
<dbReference type="HOGENOM" id="CLU_018869_3_2_5"/>
<dbReference type="OrthoDB" id="9807403at2"/>
<dbReference type="Proteomes" id="UP000002480">
    <property type="component" value="Chromosome"/>
</dbReference>
<dbReference type="GO" id="GO:0005737">
    <property type="term" value="C:cytoplasm"/>
    <property type="evidence" value="ECO:0007669"/>
    <property type="project" value="UniProtKB-SubCell"/>
</dbReference>
<dbReference type="GO" id="GO:0005524">
    <property type="term" value="F:ATP binding"/>
    <property type="evidence" value="ECO:0007669"/>
    <property type="project" value="UniProtKB-UniRule"/>
</dbReference>
<dbReference type="GO" id="GO:0032267">
    <property type="term" value="F:tRNA(Ile)-lysidine synthase activity"/>
    <property type="evidence" value="ECO:0007669"/>
    <property type="project" value="UniProtKB-EC"/>
</dbReference>
<dbReference type="GO" id="GO:0006400">
    <property type="term" value="P:tRNA modification"/>
    <property type="evidence" value="ECO:0007669"/>
    <property type="project" value="UniProtKB-UniRule"/>
</dbReference>
<dbReference type="CDD" id="cd01992">
    <property type="entry name" value="TilS_N"/>
    <property type="match status" value="1"/>
</dbReference>
<dbReference type="Gene3D" id="3.40.50.620">
    <property type="entry name" value="HUPs"/>
    <property type="match status" value="1"/>
</dbReference>
<dbReference type="HAMAP" id="MF_01161">
    <property type="entry name" value="tRNA_Ile_lys_synt"/>
    <property type="match status" value="1"/>
</dbReference>
<dbReference type="InterPro" id="IPR014729">
    <property type="entry name" value="Rossmann-like_a/b/a_fold"/>
</dbReference>
<dbReference type="InterPro" id="IPR011063">
    <property type="entry name" value="TilS/TtcA_N"/>
</dbReference>
<dbReference type="InterPro" id="IPR012094">
    <property type="entry name" value="tRNA_Ile_lys_synt"/>
</dbReference>
<dbReference type="InterPro" id="IPR012795">
    <property type="entry name" value="tRNA_Ile_lys_synt_N"/>
</dbReference>
<dbReference type="NCBIfam" id="TIGR02432">
    <property type="entry name" value="lysidine_TilS_N"/>
    <property type="match status" value="1"/>
</dbReference>
<dbReference type="PANTHER" id="PTHR43033">
    <property type="entry name" value="TRNA(ILE)-LYSIDINE SYNTHASE-RELATED"/>
    <property type="match status" value="1"/>
</dbReference>
<dbReference type="PANTHER" id="PTHR43033:SF1">
    <property type="entry name" value="TRNA(ILE)-LYSIDINE SYNTHASE-RELATED"/>
    <property type="match status" value="1"/>
</dbReference>
<dbReference type="Pfam" id="PF01171">
    <property type="entry name" value="ATP_bind_3"/>
    <property type="match status" value="1"/>
</dbReference>
<dbReference type="SUPFAM" id="SSF52402">
    <property type="entry name" value="Adenine nucleotide alpha hydrolases-like"/>
    <property type="match status" value="1"/>
</dbReference>
<proteinExistence type="inferred from homology"/>
<feature type="chain" id="PRO_0000181757" description="tRNA(Ile)-lysidine synthase">
    <location>
        <begin position="1"/>
        <end position="430"/>
    </location>
</feature>
<feature type="binding site" evidence="1">
    <location>
        <begin position="27"/>
        <end position="32"/>
    </location>
    <ligand>
        <name>ATP</name>
        <dbReference type="ChEBI" id="CHEBI:30616"/>
    </ligand>
</feature>
<keyword id="KW-0067">ATP-binding</keyword>
<keyword id="KW-0963">Cytoplasm</keyword>
<keyword id="KW-0436">Ligase</keyword>
<keyword id="KW-0547">Nucleotide-binding</keyword>
<keyword id="KW-1185">Reference proteome</keyword>
<keyword id="KW-0819">tRNA processing</keyword>
<organism>
    <name type="scientific">Rickettsia prowazekii (strain Madrid E)</name>
    <dbReference type="NCBI Taxonomy" id="272947"/>
    <lineage>
        <taxon>Bacteria</taxon>
        <taxon>Pseudomonadati</taxon>
        <taxon>Pseudomonadota</taxon>
        <taxon>Alphaproteobacteria</taxon>
        <taxon>Rickettsiales</taxon>
        <taxon>Rickettsiaceae</taxon>
        <taxon>Rickettsieae</taxon>
        <taxon>Rickettsia</taxon>
        <taxon>typhus group</taxon>
    </lineage>
</organism>
<gene>
    <name evidence="1" type="primary">tilS</name>
    <name type="ordered locus">RP042</name>
</gene>
<evidence type="ECO:0000255" key="1">
    <source>
        <dbReference type="HAMAP-Rule" id="MF_01161"/>
    </source>
</evidence>
<reference key="1">
    <citation type="journal article" date="1998" name="Nature">
        <title>The genome sequence of Rickettsia prowazekii and the origin of mitochondria.</title>
        <authorList>
            <person name="Andersson S.G.E."/>
            <person name="Zomorodipour A."/>
            <person name="Andersson J.O."/>
            <person name="Sicheritz-Ponten T."/>
            <person name="Alsmark U.C.M."/>
            <person name="Podowski R.M."/>
            <person name="Naeslund A.K."/>
            <person name="Eriksson A.-S."/>
            <person name="Winkler H.H."/>
            <person name="Kurland C.G."/>
        </authorList>
    </citation>
    <scope>NUCLEOTIDE SEQUENCE [LARGE SCALE GENOMIC DNA]</scope>
    <source>
        <strain>Madrid E</strain>
    </source>
</reference>
<name>TILS_RICPR</name>
<protein>
    <recommendedName>
        <fullName evidence="1">tRNA(Ile)-lysidine synthase</fullName>
        <ecNumber evidence="1">6.3.4.19</ecNumber>
    </recommendedName>
    <alternativeName>
        <fullName evidence="1">tRNA(Ile)-2-lysyl-cytidine synthase</fullName>
    </alternativeName>
    <alternativeName>
        <fullName evidence="1">tRNA(Ile)-lysidine synthetase</fullName>
    </alternativeName>
</protein>
<sequence>MLYEKFEYNINNLIGNFGLSKIAIAVSGGSDSISLLYLANIWARKNNIELFVISVDHNLRPQSKQENYYIHTISSNLNRKYYNLSFDHQNNFSNLQERAREGRYDLMTNLCLELDVLVLLTAHHEDDYVENFCLRLERNSGIFGLSSSNIHWYNNIQIIRPLYNIPKSELVEYLVNHKIKWFEDESNLSDKYRRNIIRQKLFKEENYIKAEISLQQLKTNKLIEDELKPALISAIAEAVKIFEYGFTFLDLVKFDKFLNEVKAQIINFLLIMISGQSRSARFYSIAHILKLISQDINFKNTVHGCVIKRIQNELLIYREFGKKLPKSKILLDKSVIWDNRFCITKNQKTPDCVITYLSLADYKAIKKQLDLKHLKNLSCKNHNAILFTLPIIKILEKVIAIPHISYYDNDVWNFEVSFAPNFVSRFTHFC</sequence>
<accession>Q9ZEA3</accession>
<comment type="function">
    <text evidence="1">Ligates lysine onto the cytidine present at position 34 of the AUA codon-specific tRNA(Ile) that contains the anticodon CAU, in an ATP-dependent manner. Cytidine is converted to lysidine, thus changing the amino acid specificity of the tRNA from methionine to isoleucine.</text>
</comment>
<comment type="catalytic activity">
    <reaction evidence="1">
        <text>cytidine(34) in tRNA(Ile2) + L-lysine + ATP = lysidine(34) in tRNA(Ile2) + AMP + diphosphate + H(+)</text>
        <dbReference type="Rhea" id="RHEA:43744"/>
        <dbReference type="Rhea" id="RHEA-COMP:10625"/>
        <dbReference type="Rhea" id="RHEA-COMP:10670"/>
        <dbReference type="ChEBI" id="CHEBI:15378"/>
        <dbReference type="ChEBI" id="CHEBI:30616"/>
        <dbReference type="ChEBI" id="CHEBI:32551"/>
        <dbReference type="ChEBI" id="CHEBI:33019"/>
        <dbReference type="ChEBI" id="CHEBI:82748"/>
        <dbReference type="ChEBI" id="CHEBI:83665"/>
        <dbReference type="ChEBI" id="CHEBI:456215"/>
        <dbReference type="EC" id="6.3.4.19"/>
    </reaction>
</comment>
<comment type="subcellular location">
    <subcellularLocation>
        <location evidence="1">Cytoplasm</location>
    </subcellularLocation>
</comment>
<comment type="domain">
    <text>The N-terminal region contains the highly conserved SGGXDS motif, predicted to be a P-loop motif involved in ATP binding.</text>
</comment>
<comment type="similarity">
    <text evidence="1">Belongs to the tRNA(Ile)-lysidine synthase family.</text>
</comment>